<name>OCC1_BOVIN</name>
<sequence>MGCGNSTAASAGAGQGPAGAAKDVTEESITEDDKRRNYGGVYVGLPSEAVNMVSNQTKTVQKN</sequence>
<feature type="chain" id="PRO_0000368223" description="Overexpressed in colon carcinoma 1 protein homolog">
    <location>
        <begin position="1"/>
        <end position="63"/>
    </location>
</feature>
<feature type="region of interest" description="Disordered" evidence="2">
    <location>
        <begin position="1"/>
        <end position="40"/>
    </location>
</feature>
<feature type="compositionally biased region" description="Low complexity" evidence="2">
    <location>
        <begin position="1"/>
        <end position="12"/>
    </location>
</feature>
<proteinExistence type="inferred from homology"/>
<accession>P0C914</accession>
<gene>
    <name evidence="1" type="primary">OCC1</name>
</gene>
<protein>
    <recommendedName>
        <fullName>Overexpressed in colon carcinoma 1 protein homolog</fullName>
        <shortName>OCC-1</shortName>
    </recommendedName>
</protein>
<reference key="1">
    <citation type="journal article" date="2001" name="Genome Res.">
        <title>Sequence evaluation of four pooled-tissue normalized bovine cDNA libraries and construction of a gene index for cattle.</title>
        <authorList>
            <person name="Smith T.P.L."/>
            <person name="Grosse W.M."/>
            <person name="Freking B.A."/>
            <person name="Roberts A.J."/>
            <person name="Stone R.T."/>
            <person name="Casas E."/>
            <person name="Wray J.E."/>
            <person name="White J."/>
            <person name="Cho J."/>
            <person name="Fahrenkrug S.C."/>
            <person name="Bennett G.L."/>
            <person name="Heaton M.P."/>
            <person name="Laegreid W.W."/>
            <person name="Rohrer G.A."/>
            <person name="Chitko-McKown C.G."/>
            <person name="Pertea G."/>
            <person name="Holt I."/>
            <person name="Karamycheva S."/>
            <person name="Liang F."/>
            <person name="Quackenbush J."/>
            <person name="Keele J.W."/>
        </authorList>
    </citation>
    <scope>NUCLEOTIDE SEQUENCE [LARGE SCALE MRNA]</scope>
</reference>
<organism>
    <name type="scientific">Bos taurus</name>
    <name type="common">Bovine</name>
    <dbReference type="NCBI Taxonomy" id="9913"/>
    <lineage>
        <taxon>Eukaryota</taxon>
        <taxon>Metazoa</taxon>
        <taxon>Chordata</taxon>
        <taxon>Craniata</taxon>
        <taxon>Vertebrata</taxon>
        <taxon>Euteleostomi</taxon>
        <taxon>Mammalia</taxon>
        <taxon>Eutheria</taxon>
        <taxon>Laurasiatheria</taxon>
        <taxon>Artiodactyla</taxon>
        <taxon>Ruminantia</taxon>
        <taxon>Pecora</taxon>
        <taxon>Bovidae</taxon>
        <taxon>Bovinae</taxon>
        <taxon>Bos</taxon>
    </lineage>
</organism>
<dbReference type="EMBL" id="BI774763">
    <property type="status" value="NOT_ANNOTATED_CDS"/>
    <property type="molecule type" value="mRNA"/>
</dbReference>
<dbReference type="RefSeq" id="NP_001138674.1">
    <property type="nucleotide sequence ID" value="NM_001145202.1"/>
</dbReference>
<dbReference type="FunCoup" id="P0C914">
    <property type="interactions" value="86"/>
</dbReference>
<dbReference type="PaxDb" id="9913-ENSBTAP00000056149"/>
<dbReference type="GeneID" id="100270756"/>
<dbReference type="KEGG" id="bta:100270756"/>
<dbReference type="CTD" id="100270756"/>
<dbReference type="eggNOG" id="ENOG502SSZ4">
    <property type="taxonomic scope" value="Eukaryota"/>
</dbReference>
<dbReference type="HOGENOM" id="CLU_189545_0_0_1"/>
<dbReference type="InParanoid" id="P0C914"/>
<dbReference type="OrthoDB" id="8909183at2759"/>
<dbReference type="Proteomes" id="UP000009136">
    <property type="component" value="Unplaced"/>
</dbReference>
<dbReference type="InterPro" id="IPR029133">
    <property type="entry name" value="OCC1"/>
</dbReference>
<dbReference type="PANTHER" id="PTHR38502">
    <property type="entry name" value="OVEREXPRESSED IN COLON CARCINOMA 1 PROTEIN"/>
    <property type="match status" value="1"/>
</dbReference>
<dbReference type="PANTHER" id="PTHR38502:SF1">
    <property type="entry name" value="OVEREXPRESSED IN COLON CARCINOMA 1 PROTEIN"/>
    <property type="match status" value="1"/>
</dbReference>
<dbReference type="Pfam" id="PF15506">
    <property type="entry name" value="OCC1"/>
    <property type="match status" value="1"/>
</dbReference>
<keyword id="KW-1185">Reference proteome</keyword>
<comment type="similarity">
    <text evidence="3">Belongs to the OCC1 family.</text>
</comment>
<evidence type="ECO:0000250" key="1">
    <source>
        <dbReference type="UniProtKB" id="Q8TAD7"/>
    </source>
</evidence>
<evidence type="ECO:0000256" key="2">
    <source>
        <dbReference type="SAM" id="MobiDB-lite"/>
    </source>
</evidence>
<evidence type="ECO:0000305" key="3"/>